<feature type="signal peptide" evidence="2">
    <location>
        <begin position="1"/>
        <end position="26"/>
    </location>
</feature>
<feature type="chain" id="PRO_0000393290" description="Exo-1,4-beta-xylosidase xlnD">
    <location>
        <begin position="27"/>
        <end position="804"/>
    </location>
</feature>
<feature type="active site" evidence="1">
    <location>
        <position position="315"/>
    </location>
</feature>
<feature type="glycosylation site" description="N-linked (GlcNAc...) asparagine" evidence="2">
    <location>
        <position position="29"/>
    </location>
</feature>
<feature type="glycosylation site" description="N-linked (GlcNAc...) asparagine" evidence="2">
    <location>
        <position position="124"/>
    </location>
</feature>
<feature type="glycosylation site" description="N-linked (GlcNAc...) asparagine" evidence="2">
    <location>
        <position position="148"/>
    </location>
</feature>
<feature type="glycosylation site" description="N-linked (GlcNAc...) asparagine" evidence="2">
    <location>
        <position position="242"/>
    </location>
</feature>
<feature type="glycosylation site" description="N-linked (GlcNAc...) asparagine" evidence="2">
    <location>
        <position position="251"/>
    </location>
</feature>
<feature type="glycosylation site" description="N-linked (GlcNAc...) asparagine" evidence="2">
    <location>
        <position position="357"/>
    </location>
</feature>
<feature type="glycosylation site" description="N-linked (GlcNAc...) asparagine" evidence="2">
    <location>
        <position position="390"/>
    </location>
</feature>
<feature type="glycosylation site" description="N-linked (GlcNAc...) asparagine" evidence="2">
    <location>
        <position position="413"/>
    </location>
</feature>
<feature type="glycosylation site" description="N-linked (GlcNAc...) asparagine" evidence="2">
    <location>
        <position position="444"/>
    </location>
</feature>
<feature type="glycosylation site" description="N-linked (GlcNAc...) asparagine" evidence="2">
    <location>
        <position position="455"/>
    </location>
</feature>
<feature type="glycosylation site" description="N-linked (GlcNAc...) asparagine" evidence="2">
    <location>
        <position position="573"/>
    </location>
</feature>
<feature type="glycosylation site" description="N-linked (GlcNAc...) asparagine" evidence="2">
    <location>
        <position position="576"/>
    </location>
</feature>
<feature type="glycosylation site" description="N-linked (GlcNAc...) asparagine" evidence="2">
    <location>
        <position position="665"/>
    </location>
</feature>
<feature type="glycosylation site" description="N-linked (GlcNAc...) asparagine" evidence="2">
    <location>
        <position position="696"/>
    </location>
</feature>
<feature type="glycosylation site" description="N-linked (GlcNAc...) asparagine" evidence="2">
    <location>
        <position position="718"/>
    </location>
</feature>
<feature type="sequence conflict" description="In Ref. 2; AAD13106." evidence="8" ref="2">
    <original>I</original>
    <variation>V</variation>
    <location>
        <position position="37"/>
    </location>
</feature>
<feature type="sequence conflict" description="In Ref. 2; AAD13106." evidence="8" ref="2">
    <original>T</original>
    <variation>S</variation>
    <location>
        <position position="72"/>
    </location>
</feature>
<feature type="sequence conflict" description="In Ref. 2; AAD13106." evidence="8" ref="2">
    <original>A</original>
    <variation>S</variation>
    <location>
        <position position="130"/>
    </location>
</feature>
<feature type="sequence conflict" description="In Ref. 2; AAD13106." evidence="8" ref="2">
    <original>E</original>
    <variation>D</variation>
    <location>
        <position position="220"/>
    </location>
</feature>
<feature type="sequence conflict" description="In Ref. 2; AAD13106." evidence="8" ref="2">
    <original>Q</original>
    <variation>H</variation>
    <location>
        <position position="275"/>
    </location>
</feature>
<feature type="sequence conflict" description="In Ref. 2; AAD13106." evidence="8" ref="2">
    <original>N</original>
    <variation>D</variation>
    <location>
        <position position="285"/>
    </location>
</feature>
<feature type="sequence conflict" description="In Ref. 2; AAD13106." evidence="8" ref="2">
    <original>A</original>
    <variation>T</variation>
    <location>
        <position position="361"/>
    </location>
</feature>
<feature type="sequence conflict" description="In Ref. 2; AAD13106." evidence="8" ref="2">
    <original>Q</original>
    <variation>K</variation>
    <location>
        <position position="372"/>
    </location>
</feature>
<feature type="sequence conflict" description="In Ref. 2; AAD13106." evidence="8" ref="2">
    <original>S</original>
    <variation>T</variation>
    <location>
        <position position="402"/>
    </location>
</feature>
<feature type="sequence conflict" description="In Ref. 2; AAD13106." evidence="8" ref="2">
    <original>Q</original>
    <variation>R</variation>
    <location>
        <position position="509"/>
    </location>
</feature>
<feature type="sequence conflict" description="In Ref. 2; AAD13106." evidence="8" ref="2">
    <original>A</original>
    <variation>S</variation>
    <location>
        <position position="550"/>
    </location>
</feature>
<feature type="sequence conflict" description="In Ref. 2; AAD13106." evidence="8" ref="2">
    <original>K</original>
    <variation>S</variation>
    <location>
        <position position="553"/>
    </location>
</feature>
<feature type="sequence conflict" description="In Ref. 2; AAD13106." evidence="8" ref="2">
    <original>S</original>
    <variation>T</variation>
    <location>
        <position position="578"/>
    </location>
</feature>
<feature type="sequence conflict" description="In Ref. 2; AAD13106." evidence="8" ref="2">
    <original>D</original>
    <variation>E</variation>
    <location>
        <position position="685"/>
    </location>
</feature>
<feature type="sequence conflict" description="In Ref. 2; AAD13106." evidence="8" ref="2">
    <original>R</original>
    <variation>K</variation>
    <location>
        <position position="702"/>
    </location>
</feature>
<feature type="sequence conflict" description="In Ref. 2; AAD13106." evidence="8" ref="2">
    <original>K</original>
    <variation>V</variation>
    <location>
        <position position="729"/>
    </location>
</feature>
<feature type="sequence conflict" description="In Ref. 2; AAD13106." evidence="8" ref="2">
    <original>E</original>
    <variation>D</variation>
    <location>
        <position position="740"/>
    </location>
</feature>
<feature type="sequence conflict" description="In Ref. 2; AAD13106." evidence="8" ref="2">
    <original>V</original>
    <variation>L</variation>
    <location>
        <position position="769"/>
    </location>
</feature>
<protein>
    <recommendedName>
        <fullName>Exo-1,4-beta-xylosidase xlnD</fullName>
        <ecNumber>3.2.1.37</ecNumber>
    </recommendedName>
    <alternativeName>
        <fullName>1,4-beta-D-xylan xylohydrolase xlnD</fullName>
    </alternativeName>
    <alternativeName>
        <fullName>Beta-xylosidase A</fullName>
    </alternativeName>
    <alternativeName>
        <fullName>Beta-xylosidase xlnD</fullName>
    </alternativeName>
    <alternativeName>
        <fullName>Xylobiase xlnD</fullName>
    </alternativeName>
</protein>
<gene>
    <name type="primary">xlnD</name>
    <name type="synonym">xylA</name>
</gene>
<dbReference type="EC" id="3.2.1.37"/>
<dbReference type="EMBL" id="Z84377">
    <property type="protein sequence ID" value="CAB06417.1"/>
    <property type="molecule type" value="Genomic_DNA"/>
</dbReference>
<dbReference type="EMBL" id="AF108944">
    <property type="protein sequence ID" value="AAD13106.1"/>
    <property type="molecule type" value="mRNA"/>
</dbReference>
<dbReference type="RefSeq" id="XP_001389416.1">
    <property type="nucleotide sequence ID" value="XM_001389379.3"/>
</dbReference>
<dbReference type="SMR" id="O00089"/>
<dbReference type="BindingDB" id="O00089"/>
<dbReference type="ChEMBL" id="CHEMBL4728"/>
<dbReference type="Allergome" id="3129">
    <property type="allergen name" value="Asp n 14.0101"/>
</dbReference>
<dbReference type="Allergome" id="82">
    <property type="allergen name" value="Asp n 14"/>
</dbReference>
<dbReference type="CAZy" id="GH3">
    <property type="family name" value="Glycoside Hydrolase Family 3"/>
</dbReference>
<dbReference type="GlyCosmos" id="O00089">
    <property type="glycosylation" value="15 sites, No reported glycans"/>
</dbReference>
<dbReference type="PaxDb" id="5061-CADANGAP00000967"/>
<dbReference type="EnsemblFungi" id="CAK37179">
    <property type="protein sequence ID" value="CAK37179"/>
    <property type="gene ID" value="An01g09960"/>
</dbReference>
<dbReference type="GeneID" id="4977682"/>
<dbReference type="KEGG" id="ang:An01g09960"/>
<dbReference type="VEuPathDB" id="FungiDB:An01g09960"/>
<dbReference type="VEuPathDB" id="FungiDB:ASPNIDRAFT2_1156695"/>
<dbReference type="VEuPathDB" id="FungiDB:ATCC64974_15350"/>
<dbReference type="VEuPathDB" id="FungiDB:M747DRAFT_324817"/>
<dbReference type="eggNOG" id="ENOG502QQ55">
    <property type="taxonomic scope" value="Eukaryota"/>
</dbReference>
<dbReference type="BioCyc" id="MetaCyc:MONOMER-16902"/>
<dbReference type="BRENDA" id="3.2.1.37">
    <property type="organism ID" value="518"/>
</dbReference>
<dbReference type="SABIO-RK" id="O00089"/>
<dbReference type="UniPathway" id="UPA00114"/>
<dbReference type="GO" id="GO:0005576">
    <property type="term" value="C:extracellular region"/>
    <property type="evidence" value="ECO:0007669"/>
    <property type="project" value="UniProtKB-SubCell"/>
</dbReference>
<dbReference type="GO" id="GO:0046556">
    <property type="term" value="F:alpha-L-arabinofuranosidase activity"/>
    <property type="evidence" value="ECO:0007669"/>
    <property type="project" value="TreeGrafter"/>
</dbReference>
<dbReference type="GO" id="GO:0009044">
    <property type="term" value="F:xylan 1,4-beta-xylosidase activity"/>
    <property type="evidence" value="ECO:0007669"/>
    <property type="project" value="UniProtKB-EC"/>
</dbReference>
<dbReference type="GO" id="GO:0031222">
    <property type="term" value="P:arabinan catabolic process"/>
    <property type="evidence" value="ECO:0007669"/>
    <property type="project" value="TreeGrafter"/>
</dbReference>
<dbReference type="GO" id="GO:0045493">
    <property type="term" value="P:xylan catabolic process"/>
    <property type="evidence" value="ECO:0000314"/>
    <property type="project" value="CACAO"/>
</dbReference>
<dbReference type="FunFam" id="2.60.40.10:FF:001420">
    <property type="entry name" value="Exo-1,4-beta-xylosidase xlnD"/>
    <property type="match status" value="1"/>
</dbReference>
<dbReference type="FunFam" id="3.20.20.300:FF:000009">
    <property type="entry name" value="Exo-1,4-beta-xylosidase xlnD"/>
    <property type="match status" value="1"/>
</dbReference>
<dbReference type="FunFam" id="3.40.50.1700:FF:000007">
    <property type="entry name" value="Exo-1,4-beta-xylosidase xlnD"/>
    <property type="match status" value="1"/>
</dbReference>
<dbReference type="Gene3D" id="3.40.50.1700">
    <property type="entry name" value="Glycoside hydrolase family 3 C-terminal domain"/>
    <property type="match status" value="1"/>
</dbReference>
<dbReference type="Gene3D" id="3.20.20.300">
    <property type="entry name" value="Glycoside hydrolase, family 3, N-terminal domain"/>
    <property type="match status" value="1"/>
</dbReference>
<dbReference type="Gene3D" id="2.60.40.10">
    <property type="entry name" value="Immunoglobulins"/>
    <property type="match status" value="1"/>
</dbReference>
<dbReference type="InterPro" id="IPR044993">
    <property type="entry name" value="BXL"/>
</dbReference>
<dbReference type="InterPro" id="IPR026891">
    <property type="entry name" value="Fn3-like"/>
</dbReference>
<dbReference type="InterPro" id="IPR002772">
    <property type="entry name" value="Glyco_hydro_3_C"/>
</dbReference>
<dbReference type="InterPro" id="IPR036881">
    <property type="entry name" value="Glyco_hydro_3_C_sf"/>
</dbReference>
<dbReference type="InterPro" id="IPR001764">
    <property type="entry name" value="Glyco_hydro_3_N"/>
</dbReference>
<dbReference type="InterPro" id="IPR036962">
    <property type="entry name" value="Glyco_hydro_3_N_sf"/>
</dbReference>
<dbReference type="InterPro" id="IPR017853">
    <property type="entry name" value="Glycoside_hydrolase_SF"/>
</dbReference>
<dbReference type="InterPro" id="IPR013783">
    <property type="entry name" value="Ig-like_fold"/>
</dbReference>
<dbReference type="PANTHER" id="PTHR42721:SF13">
    <property type="entry name" value="EXO-1,4-BETA-XYLOSIDASE XLND"/>
    <property type="match status" value="1"/>
</dbReference>
<dbReference type="PANTHER" id="PTHR42721">
    <property type="entry name" value="SUGAR HYDROLASE-RELATED"/>
    <property type="match status" value="1"/>
</dbReference>
<dbReference type="Pfam" id="PF14310">
    <property type="entry name" value="Fn3-like"/>
    <property type="match status" value="1"/>
</dbReference>
<dbReference type="Pfam" id="PF00933">
    <property type="entry name" value="Glyco_hydro_3"/>
    <property type="match status" value="1"/>
</dbReference>
<dbReference type="Pfam" id="PF01915">
    <property type="entry name" value="Glyco_hydro_3_C"/>
    <property type="match status" value="1"/>
</dbReference>
<dbReference type="SMART" id="SM01217">
    <property type="entry name" value="Fn3_like"/>
    <property type="match status" value="1"/>
</dbReference>
<dbReference type="SUPFAM" id="SSF51445">
    <property type="entry name" value="(Trans)glycosidases"/>
    <property type="match status" value="1"/>
</dbReference>
<dbReference type="SUPFAM" id="SSF52279">
    <property type="entry name" value="Beta-D-glucan exohydrolase, C-terminal domain"/>
    <property type="match status" value="1"/>
</dbReference>
<evidence type="ECO:0000250" key="1"/>
<evidence type="ECO:0000255" key="2"/>
<evidence type="ECO:0000269" key="3">
    <source>
    </source>
</evidence>
<evidence type="ECO:0000269" key="4">
    <source>
    </source>
</evidence>
<evidence type="ECO:0000269" key="5">
    <source>
    </source>
</evidence>
<evidence type="ECO:0000269" key="6">
    <source>
    </source>
</evidence>
<evidence type="ECO:0000269" key="7">
    <source>
    </source>
</evidence>
<evidence type="ECO:0000305" key="8"/>
<reference key="1">
    <citation type="journal article" date="1997" name="Eur. J. Biochem.">
        <title>beta-Xylosidase activity, encoded by xlnD, is essential for complete hydrolysis of xylan by Aspergillus niger but not for induction of the xylanolytic enzyme spectrum.</title>
        <authorList>
            <person name="van Peij N.N."/>
            <person name="Brinkmann J."/>
            <person name="Vrsanska M."/>
            <person name="Visser J."/>
            <person name="de Graaff L.H."/>
        </authorList>
    </citation>
    <scope>NUCLEOTIDE SEQUENCE [GENOMIC DNA]</scope>
    <scope>FUNCTION</scope>
</reference>
<reference key="2">
    <citation type="journal article" date="2001" name="Appl. Environ. Microbiol.">
        <title>Degradation of xylan to D-xylose by recombinant Saccharomyces cerevisiae coexpressing the Aspergillus niger beta-xylosidase (xlnD) and the Trichoderma reesei xylanase II (xyn2) genes.</title>
        <authorList>
            <person name="La Grange D.C."/>
            <person name="Pretorius I.S."/>
            <person name="Claeyssens M."/>
            <person name="van Zyl W.H."/>
        </authorList>
    </citation>
    <scope>NUCLEOTIDE SEQUENCE [MRNA]</scope>
    <scope>FUNCTION</scope>
    <scope>BIOPHYSICOCHEMICAL PROPERTIES</scope>
    <source>
        <strain>ATCC 90196 / Alo MP-22</strain>
    </source>
</reference>
<reference key="3">
    <citation type="journal article" date="1998" name="Appl. Environ. Microbiol.">
        <title>The transcriptional activator XlnR regulates both xylanolytic and endoglucanase gene expression in Aspergillus niger.</title>
        <authorList>
            <person name="van Peij N.N."/>
            <person name="Gielkens M.M."/>
            <person name="de Vries R.P."/>
            <person name="Visser J."/>
            <person name="de Graaff L.H."/>
        </authorList>
    </citation>
    <scope>INDUCTION</scope>
</reference>
<reference key="4">
    <citation type="journal article" date="1999" name="Res. Microbiol.">
        <title>CreA modulates the XlnR-induced expression on xylose of Aspergillus niger genes involved in xylan degradation.</title>
        <authorList>
            <person name="de Vries R.P."/>
            <person name="Visser J."/>
            <person name="de Graaff L.H."/>
        </authorList>
    </citation>
    <scope>INDUCTION</scope>
</reference>
<reference key="5">
    <citation type="journal article" date="2008" name="Appl. Biochem. Biotechnol.">
        <title>Heterologous expression of Aspergillus niger beta-D-xylosidase (XlnD): characterization on lignocellulosic substrates.</title>
        <authorList>
            <person name="Selig M.J."/>
            <person name="Knoshaug E.P."/>
            <person name="Decker S.R."/>
            <person name="Baker J.O."/>
            <person name="Himmel M.E."/>
            <person name="Adney W.S."/>
        </authorList>
    </citation>
    <scope>FUNCTION</scope>
    <scope>BIOPHYSICOCHEMICAL PROPERTIES</scope>
    <scope>IDENTIFICATION BY MASS SPECTROMETRY</scope>
</reference>
<comment type="function">
    <text evidence="4 5 6">Xylan 1,4-beta-xylosidase involved in the hydrolysis of xylan, a major structural heterogeneous polysaccharide found in plant biomass representing the second most abundant polysaccharide in the biosphere, after cellulose.</text>
</comment>
<comment type="catalytic activity">
    <reaction>
        <text>Hydrolysis of (1-&gt;4)-beta-D-xylans, to remove successive D-xylose residues from the non-reducing termini.</text>
        <dbReference type="EC" id="3.2.1.37"/>
    </reaction>
</comment>
<comment type="biophysicochemical properties">
    <kinetics>
        <KM evidence="4 5">255 uM for pNP-beta-D-xylopyranoside</KM>
    </kinetics>
    <phDependence>
        <text evidence="4 5">Optimum pH is 3.2.</text>
    </phDependence>
    <temperatureDependence>
        <text evidence="4 5">Optimum temperature is 60 degrees Celsius. Has a high thermal denaturation point. The Tmax of the protein was estimated to be 78.2 degrees Celsius.</text>
    </temperatureDependence>
</comment>
<comment type="pathway">
    <text>Glycan degradation; xylan degradation.</text>
</comment>
<comment type="subcellular location">
    <subcellularLocation>
        <location evidence="1">Secreted</location>
    </subcellularLocation>
</comment>
<comment type="induction">
    <text evidence="3 7">Expression is under the control of the xylanolytic transcriptional activator xlnR and the repressor creA.</text>
</comment>
<comment type="similarity">
    <text evidence="8">Belongs to the glycosyl hydrolase 3 family.</text>
</comment>
<proteinExistence type="evidence at protein level"/>
<keyword id="KW-0119">Carbohydrate metabolism</keyword>
<keyword id="KW-0325">Glycoprotein</keyword>
<keyword id="KW-0326">Glycosidase</keyword>
<keyword id="KW-0378">Hydrolase</keyword>
<keyword id="KW-0624">Polysaccharide degradation</keyword>
<keyword id="KW-0964">Secreted</keyword>
<keyword id="KW-0732">Signal</keyword>
<keyword id="KW-0858">Xylan degradation</keyword>
<sequence length="804" mass="87211">MAHSMSRPVAATAAALLALALPQALAQANTSYVDYNIEANPDLYPLCIETIPLSFPDCQNGPLRSHLICDETATPYDRAASLISLFTLDELIANTGNTGLGVSRLGLPAYQVWSEALHGLDRANFSDSGAYNWATSFPQPILTTAALNRTLIHQIASIISTQGRAFNNAGRYGLDVYAPNINTFRHPVWGRGQETPGEDVSLAAVYAYEYITGIQGPDPESNLKLAATAKHYAGYDIENWHNHSRLGNDMNITQQDLSEYYTPQFHVAARDAKVQSVMCAYNAVNGVPACADSYFLQTLLRDTFGFVDHGYVSSDCDAAYNIYNPHGYASSQAAAAAEAILAGTDIDCGTTYQWHLNESIAAGDLSRDDIEQGVIRLYTTLVQAGYFDSNTTKANNPYRDLSWSDVLETDAWNISYQAATQGIVLLKNSNNVLPLTEKAYPPSNTTVALIGPWANATTQLLGNYYGNAPYMISPRAAFEEAGYKVNFAEGTGISSTSTSGFAAALSAAQSADVIIYAGGIDNTLEAEALDRESIAWPGNQLDLIQKLASAAGKKPLIVLQMGGGQVDSSSLKNNTNVSALLWGGYPGQSGGFALRDIITGKKNPAGRLVTTQYPASYAEEFPATDMNLRPEGDNPGQTYKWYTGEAVYEFGHGLFYTTFAESSSNTTTKEVKLNIQDILSQTHEDLASITQLPVLNFTANIRNTGKLESDYTAMVFANTSDAGPAPYPKKWLVGWDRLGEVKVGETRELRVPVEVGSFARVNEDGDWVVFPGTFELALNLERKVRVKVVLEGEEEVVLKWPGKE</sequence>
<accession>O00089</accession>
<accession>O93933</accession>
<organism>
    <name type="scientific">Aspergillus niger</name>
    <dbReference type="NCBI Taxonomy" id="5061"/>
    <lineage>
        <taxon>Eukaryota</taxon>
        <taxon>Fungi</taxon>
        <taxon>Dikarya</taxon>
        <taxon>Ascomycota</taxon>
        <taxon>Pezizomycotina</taxon>
        <taxon>Eurotiomycetes</taxon>
        <taxon>Eurotiomycetidae</taxon>
        <taxon>Eurotiales</taxon>
        <taxon>Aspergillaceae</taxon>
        <taxon>Aspergillus</taxon>
        <taxon>Aspergillus subgen. Circumdati</taxon>
    </lineage>
</organism>
<name>XYND_ASPNG</name>